<reference key="1">
    <citation type="journal article" date="2012" name="BMC Microbiol.">
        <title>Genome sequence of Desulfitobacterium hafniense DCB-2, a Gram-positive anaerobe capable of dehalogenation and metal reduction.</title>
        <authorList>
            <person name="Kim S.H."/>
            <person name="Harzman C."/>
            <person name="Davis J.K."/>
            <person name="Hutcheson R."/>
            <person name="Broderick J.B."/>
            <person name="Marsh T.L."/>
            <person name="Tiedje J.M."/>
        </authorList>
    </citation>
    <scope>NUCLEOTIDE SEQUENCE [LARGE SCALE GENOMIC DNA]</scope>
    <source>
        <strain>DSM 10664 / DCB-2</strain>
    </source>
</reference>
<comment type="function">
    <text evidence="1">The heterodimer acts as both an ATP-dependent DNA helicase and an ATP-dependent, dual-direction single-stranded exonuclease. Recognizes the chi site generating a DNA molecule suitable for the initiation of homologous recombination. The AddB subunit has 5' -&gt; 3' nuclease activity but not helicase activity.</text>
</comment>
<comment type="cofactor">
    <cofactor evidence="1">
        <name>Mg(2+)</name>
        <dbReference type="ChEBI" id="CHEBI:18420"/>
    </cofactor>
</comment>
<comment type="cofactor">
    <cofactor evidence="1">
        <name>[4Fe-4S] cluster</name>
        <dbReference type="ChEBI" id="CHEBI:49883"/>
    </cofactor>
    <text evidence="1">Binds 1 [4Fe-4S] cluster.</text>
</comment>
<comment type="subunit">
    <text evidence="1">Heterodimer of AddA and AddB.</text>
</comment>
<comment type="miscellaneous">
    <text evidence="1">Despite having conserved helicase domains, this subunit does not have helicase activity.</text>
</comment>
<comment type="similarity">
    <text evidence="1">Belongs to the helicase family. AddB/RexB type 1 subfamily.</text>
</comment>
<sequence length="1218" mass="137160">MRFIVGRAGTGKSTLCRQEIHKESQEHPEGLPLILLVPEQATHQMEMSLAHDPQSGGILRAQVLSFRRLGWRVFSEVGGGGKAVIGEVGKRMLLRRLLLNHRSDLRVFARSATRPGMADLLAQAIAEFKIYRITPDQLRGIEDADELLLQKTHELAFLYEELNKSLGTAARDPDDELNLVAGKISQAPFLQGAKIWVDGFKGFTPQELYVIQAMLGTAAEITVSLPLDPELLKAGTPRFKPGEELFYEPRQTYQGLVDLAREAKASISHVFLTETHRFEKAGLKHLERFYNAYPTQTFPGGDDSTAPDPLGIALFPAANKRAEVEGVARELRRLAREEGRTWRDCSVVTRDLPGYQGIIEQVFNAHEIPYFLDHKRPVIHHPLLELLLSAIETVQKDWAYEPLFRCLKTDFFPCSKDRIDRLENYCLAYGIHGSAWKGNRSWSYYPDPNHKEETAGLNETRQIIYDLFSPFDQAIRPHPEAGGPSVTVAQITEAIYELLIRLKVPEHLQEWAEAAHSRGDLAEAQLQNQIWDAVIQVLDELVAGLGEEVMDLSDFAMILTSGLENLQLGLIPPGYDQVLVGSLDRSRNPETAVLFLLGANDGILPGKPSDEGVFDELERLRLESKGIMLAPKGKVQVYEEQYFIYTALTRAREQLYISYPLTDEEGRGLTVSPVIHRLKMIFPGLPEKYLSLDEEEPGALPHPYALLPAYALHLQKLRQGSSLSPLWQAIRLWFLSQTAAFPQVQLLEKGLRDQNEEGKLPQPLARQLYGKRLVTSVSRLELFARCPFAHFAQYGLKLKERSNYRLSPPDMGQFFHAVLHDYAIALRERGLDWGELSKEQSWQLVNETAEPIALQLQNKILLSNARYRYLTHKLKRTVHHAVRVLGEHARQGVFLPMELEVKFGPQEALPPLEVPLSGGNSLLLRGQIDRIDGAVLGHEIYLRIFDYKSREAHVSLNQIYHGLDLQLLAYLDAALQGAQILVSSSGLAEGSKGSEGSEGSEDSEDSTIHPAGFLYFPVLEPQLKSKTLLYPEQLEKDRIKAVKVKGYLLADRQVLLAMDRDLENSSLLGIKLTKSGEFKKGSPILTEEQFALLRKHLQHFLRCSGEALLEGDISITPYRQGKHTACQFCSYKPLCHFDPYLPENNYRNLPVIQDEEFWQRVQSQDSEQYPEQHPPTSVPGETSRRALQKDGGNSPRGQELIWLGEDEAGAGKEDDGHE</sequence>
<gene>
    <name evidence="1" type="primary">addB</name>
    <name type="ordered locus">Dhaf_2833</name>
</gene>
<keyword id="KW-0004">4Fe-4S</keyword>
<keyword id="KW-0067">ATP-binding</keyword>
<keyword id="KW-0227">DNA damage</keyword>
<keyword id="KW-0234">DNA repair</keyword>
<keyword id="KW-0238">DNA-binding</keyword>
<keyword id="KW-0269">Exonuclease</keyword>
<keyword id="KW-0347">Helicase</keyword>
<keyword id="KW-0378">Hydrolase</keyword>
<keyword id="KW-0408">Iron</keyword>
<keyword id="KW-0411">Iron-sulfur</keyword>
<keyword id="KW-0479">Metal-binding</keyword>
<keyword id="KW-0540">Nuclease</keyword>
<keyword id="KW-0547">Nucleotide-binding</keyword>
<accession>B8FXD8</accession>
<feature type="chain" id="PRO_0000379186" description="ATP-dependent helicase/deoxyribonuclease subunit B">
    <location>
        <begin position="1"/>
        <end position="1218"/>
    </location>
</feature>
<feature type="domain" description="UvrD-like helicase ATP-binding" evidence="1">
    <location>
        <begin position="1"/>
        <end position="279"/>
    </location>
</feature>
<feature type="domain" description="UvrD-like helicase C-terminal" evidence="1">
    <location>
        <begin position="281"/>
        <end position="588"/>
    </location>
</feature>
<feature type="region of interest" description="Disordered" evidence="2">
    <location>
        <begin position="987"/>
        <end position="1006"/>
    </location>
</feature>
<feature type="region of interest" description="Disordered" evidence="2">
    <location>
        <begin position="1160"/>
        <end position="1218"/>
    </location>
</feature>
<feature type="compositionally biased region" description="Polar residues" evidence="2">
    <location>
        <begin position="1160"/>
        <end position="1169"/>
    </location>
</feature>
<feature type="compositionally biased region" description="Basic and acidic residues" evidence="2">
    <location>
        <begin position="1209"/>
        <end position="1218"/>
    </location>
</feature>
<feature type="binding site" evidence="1">
    <location>
        <begin position="6"/>
        <end position="13"/>
    </location>
    <ligand>
        <name>ATP</name>
        <dbReference type="ChEBI" id="CHEBI:30616"/>
    </ligand>
</feature>
<feature type="binding site" evidence="1">
    <location>
        <position position="786"/>
    </location>
    <ligand>
        <name>[4Fe-4S] cluster</name>
        <dbReference type="ChEBI" id="CHEBI:49883"/>
    </ligand>
</feature>
<feature type="binding site" evidence="1">
    <location>
        <position position="1126"/>
    </location>
    <ligand>
        <name>[4Fe-4S] cluster</name>
        <dbReference type="ChEBI" id="CHEBI:49883"/>
    </ligand>
</feature>
<feature type="binding site" evidence="1">
    <location>
        <position position="1129"/>
    </location>
    <ligand>
        <name>[4Fe-4S] cluster</name>
        <dbReference type="ChEBI" id="CHEBI:49883"/>
    </ligand>
</feature>
<feature type="binding site" evidence="1">
    <location>
        <position position="1135"/>
    </location>
    <ligand>
        <name>[4Fe-4S] cluster</name>
        <dbReference type="ChEBI" id="CHEBI:49883"/>
    </ligand>
</feature>
<protein>
    <recommendedName>
        <fullName evidence="1">ATP-dependent helicase/deoxyribonuclease subunit B</fullName>
        <ecNumber evidence="1">3.1.-.-</ecNumber>
    </recommendedName>
    <alternativeName>
        <fullName evidence="1">ATP-dependent helicase/nuclease subunit AddB</fullName>
    </alternativeName>
</protein>
<proteinExistence type="inferred from homology"/>
<evidence type="ECO:0000255" key="1">
    <source>
        <dbReference type="HAMAP-Rule" id="MF_01452"/>
    </source>
</evidence>
<evidence type="ECO:0000256" key="2">
    <source>
        <dbReference type="SAM" id="MobiDB-lite"/>
    </source>
</evidence>
<name>ADDB_DESHD</name>
<dbReference type="EC" id="3.1.-.-" evidence="1"/>
<dbReference type="EMBL" id="CP001336">
    <property type="protein sequence ID" value="ACL20857.1"/>
    <property type="molecule type" value="Genomic_DNA"/>
</dbReference>
<dbReference type="RefSeq" id="WP_005816091.1">
    <property type="nucleotide sequence ID" value="NC_011830.1"/>
</dbReference>
<dbReference type="SMR" id="B8FXD8"/>
<dbReference type="KEGG" id="dhd:Dhaf_2833"/>
<dbReference type="HOGENOM" id="CLU_007838_0_0_9"/>
<dbReference type="Proteomes" id="UP000007726">
    <property type="component" value="Chromosome"/>
</dbReference>
<dbReference type="GO" id="GO:0051539">
    <property type="term" value="F:4 iron, 4 sulfur cluster binding"/>
    <property type="evidence" value="ECO:0007669"/>
    <property type="project" value="UniProtKB-KW"/>
</dbReference>
<dbReference type="GO" id="GO:0008409">
    <property type="term" value="F:5'-3' exonuclease activity"/>
    <property type="evidence" value="ECO:0007669"/>
    <property type="project" value="UniProtKB-UniRule"/>
</dbReference>
<dbReference type="GO" id="GO:0005524">
    <property type="term" value="F:ATP binding"/>
    <property type="evidence" value="ECO:0007669"/>
    <property type="project" value="UniProtKB-UniRule"/>
</dbReference>
<dbReference type="GO" id="GO:0003690">
    <property type="term" value="F:double-stranded DNA binding"/>
    <property type="evidence" value="ECO:0007669"/>
    <property type="project" value="UniProtKB-UniRule"/>
</dbReference>
<dbReference type="GO" id="GO:0004386">
    <property type="term" value="F:helicase activity"/>
    <property type="evidence" value="ECO:0007669"/>
    <property type="project" value="UniProtKB-KW"/>
</dbReference>
<dbReference type="GO" id="GO:0046872">
    <property type="term" value="F:metal ion binding"/>
    <property type="evidence" value="ECO:0007669"/>
    <property type="project" value="UniProtKB-KW"/>
</dbReference>
<dbReference type="GO" id="GO:0000724">
    <property type="term" value="P:double-strand break repair via homologous recombination"/>
    <property type="evidence" value="ECO:0007669"/>
    <property type="project" value="UniProtKB-UniRule"/>
</dbReference>
<dbReference type="Gene3D" id="3.40.50.300">
    <property type="entry name" value="P-loop containing nucleotide triphosphate hydrolases"/>
    <property type="match status" value="4"/>
</dbReference>
<dbReference type="HAMAP" id="MF_01452">
    <property type="entry name" value="AddB_type1"/>
    <property type="match status" value="1"/>
</dbReference>
<dbReference type="InterPro" id="IPR049035">
    <property type="entry name" value="ADDB_N"/>
</dbReference>
<dbReference type="InterPro" id="IPR014140">
    <property type="entry name" value="DNA_helicase_suAddB"/>
</dbReference>
<dbReference type="InterPro" id="IPR014017">
    <property type="entry name" value="DNA_helicase_UvrD-like_C"/>
</dbReference>
<dbReference type="InterPro" id="IPR027417">
    <property type="entry name" value="P-loop_NTPase"/>
</dbReference>
<dbReference type="InterPro" id="IPR038726">
    <property type="entry name" value="PDDEXK_AddAB-type"/>
</dbReference>
<dbReference type="NCBIfam" id="TIGR02773">
    <property type="entry name" value="addB_Gpos"/>
    <property type="match status" value="1"/>
</dbReference>
<dbReference type="PANTHER" id="PTHR30591">
    <property type="entry name" value="RECBCD ENZYME SUBUNIT RECC"/>
    <property type="match status" value="1"/>
</dbReference>
<dbReference type="PANTHER" id="PTHR30591:SF1">
    <property type="entry name" value="RECBCD ENZYME SUBUNIT RECC"/>
    <property type="match status" value="1"/>
</dbReference>
<dbReference type="Pfam" id="PF21445">
    <property type="entry name" value="ADDB_N"/>
    <property type="match status" value="1"/>
</dbReference>
<dbReference type="Pfam" id="PF12705">
    <property type="entry name" value="PDDEXK_1"/>
    <property type="match status" value="1"/>
</dbReference>
<dbReference type="Pfam" id="PF13361">
    <property type="entry name" value="UvrD_C"/>
    <property type="match status" value="1"/>
</dbReference>
<dbReference type="SUPFAM" id="SSF52540">
    <property type="entry name" value="P-loop containing nucleoside triphosphate hydrolases"/>
    <property type="match status" value="1"/>
</dbReference>
<dbReference type="PROSITE" id="PS51198">
    <property type="entry name" value="UVRD_HELICASE_ATP_BIND"/>
    <property type="match status" value="1"/>
</dbReference>
<dbReference type="PROSITE" id="PS51217">
    <property type="entry name" value="UVRD_HELICASE_CTER"/>
    <property type="match status" value="1"/>
</dbReference>
<organism>
    <name type="scientific">Desulfitobacterium hafniense (strain DSM 10664 / DCB-2)</name>
    <dbReference type="NCBI Taxonomy" id="272564"/>
    <lineage>
        <taxon>Bacteria</taxon>
        <taxon>Bacillati</taxon>
        <taxon>Bacillota</taxon>
        <taxon>Clostridia</taxon>
        <taxon>Eubacteriales</taxon>
        <taxon>Desulfitobacteriaceae</taxon>
        <taxon>Desulfitobacterium</taxon>
    </lineage>
</organism>